<dbReference type="EC" id="5.4.99.12" evidence="1"/>
<dbReference type="EMBL" id="CP000510">
    <property type="protein sequence ID" value="ABM03737.1"/>
    <property type="molecule type" value="Genomic_DNA"/>
</dbReference>
<dbReference type="RefSeq" id="WP_011770297.1">
    <property type="nucleotide sequence ID" value="NC_008709.1"/>
</dbReference>
<dbReference type="SMR" id="A1SW72"/>
<dbReference type="STRING" id="357804.Ping_1969"/>
<dbReference type="KEGG" id="pin:Ping_1969"/>
<dbReference type="eggNOG" id="COG0101">
    <property type="taxonomic scope" value="Bacteria"/>
</dbReference>
<dbReference type="HOGENOM" id="CLU_014673_0_2_6"/>
<dbReference type="OrthoDB" id="9811823at2"/>
<dbReference type="Proteomes" id="UP000000639">
    <property type="component" value="Chromosome"/>
</dbReference>
<dbReference type="GO" id="GO:0003723">
    <property type="term" value="F:RNA binding"/>
    <property type="evidence" value="ECO:0007669"/>
    <property type="project" value="InterPro"/>
</dbReference>
<dbReference type="GO" id="GO:0160147">
    <property type="term" value="F:tRNA pseudouridine(38-40) synthase activity"/>
    <property type="evidence" value="ECO:0007669"/>
    <property type="project" value="UniProtKB-EC"/>
</dbReference>
<dbReference type="GO" id="GO:0031119">
    <property type="term" value="P:tRNA pseudouridine synthesis"/>
    <property type="evidence" value="ECO:0007669"/>
    <property type="project" value="UniProtKB-UniRule"/>
</dbReference>
<dbReference type="CDD" id="cd02570">
    <property type="entry name" value="PseudoU_synth_EcTruA"/>
    <property type="match status" value="1"/>
</dbReference>
<dbReference type="FunFam" id="3.30.70.580:FF:000001">
    <property type="entry name" value="tRNA pseudouridine synthase A"/>
    <property type="match status" value="1"/>
</dbReference>
<dbReference type="Gene3D" id="3.30.70.660">
    <property type="entry name" value="Pseudouridine synthase I, catalytic domain, C-terminal subdomain"/>
    <property type="match status" value="1"/>
</dbReference>
<dbReference type="Gene3D" id="3.30.70.580">
    <property type="entry name" value="Pseudouridine synthase I, catalytic domain, N-terminal subdomain"/>
    <property type="match status" value="1"/>
</dbReference>
<dbReference type="HAMAP" id="MF_00171">
    <property type="entry name" value="TruA"/>
    <property type="match status" value="1"/>
</dbReference>
<dbReference type="InterPro" id="IPR020103">
    <property type="entry name" value="PsdUridine_synth_cat_dom_sf"/>
</dbReference>
<dbReference type="InterPro" id="IPR001406">
    <property type="entry name" value="PsdUridine_synth_TruA"/>
</dbReference>
<dbReference type="InterPro" id="IPR020097">
    <property type="entry name" value="PsdUridine_synth_TruA_a/b_dom"/>
</dbReference>
<dbReference type="InterPro" id="IPR020095">
    <property type="entry name" value="PsdUridine_synth_TruA_C"/>
</dbReference>
<dbReference type="InterPro" id="IPR020094">
    <property type="entry name" value="TruA/RsuA/RluB/E/F_N"/>
</dbReference>
<dbReference type="NCBIfam" id="TIGR00071">
    <property type="entry name" value="hisT_truA"/>
    <property type="match status" value="1"/>
</dbReference>
<dbReference type="PANTHER" id="PTHR11142">
    <property type="entry name" value="PSEUDOURIDYLATE SYNTHASE"/>
    <property type="match status" value="1"/>
</dbReference>
<dbReference type="PANTHER" id="PTHR11142:SF0">
    <property type="entry name" value="TRNA PSEUDOURIDINE SYNTHASE-LIKE 1"/>
    <property type="match status" value="1"/>
</dbReference>
<dbReference type="Pfam" id="PF01416">
    <property type="entry name" value="PseudoU_synth_1"/>
    <property type="match status" value="2"/>
</dbReference>
<dbReference type="PIRSF" id="PIRSF001430">
    <property type="entry name" value="tRNA_psdUrid_synth"/>
    <property type="match status" value="1"/>
</dbReference>
<dbReference type="SUPFAM" id="SSF55120">
    <property type="entry name" value="Pseudouridine synthase"/>
    <property type="match status" value="1"/>
</dbReference>
<comment type="function">
    <text evidence="1">Formation of pseudouridine at positions 38, 39 and 40 in the anticodon stem and loop of transfer RNAs.</text>
</comment>
<comment type="catalytic activity">
    <reaction evidence="1">
        <text>uridine(38/39/40) in tRNA = pseudouridine(38/39/40) in tRNA</text>
        <dbReference type="Rhea" id="RHEA:22376"/>
        <dbReference type="Rhea" id="RHEA-COMP:10085"/>
        <dbReference type="Rhea" id="RHEA-COMP:10087"/>
        <dbReference type="ChEBI" id="CHEBI:65314"/>
        <dbReference type="ChEBI" id="CHEBI:65315"/>
        <dbReference type="EC" id="5.4.99.12"/>
    </reaction>
</comment>
<comment type="subunit">
    <text evidence="1">Homodimer.</text>
</comment>
<comment type="similarity">
    <text evidence="1">Belongs to the tRNA pseudouridine synthase TruA family.</text>
</comment>
<feature type="chain" id="PRO_1000017143" description="tRNA pseudouridine synthase A">
    <location>
        <begin position="1"/>
        <end position="261"/>
    </location>
</feature>
<feature type="active site" description="Nucleophile" evidence="1">
    <location>
        <position position="51"/>
    </location>
</feature>
<feature type="binding site" evidence="1">
    <location>
        <position position="109"/>
    </location>
    <ligand>
        <name>substrate</name>
    </ligand>
</feature>
<reference key="1">
    <citation type="journal article" date="2008" name="BMC Genomics">
        <title>Genomics of an extreme psychrophile, Psychromonas ingrahamii.</title>
        <authorList>
            <person name="Riley M."/>
            <person name="Staley J.T."/>
            <person name="Danchin A."/>
            <person name="Wang T.Z."/>
            <person name="Brettin T.S."/>
            <person name="Hauser L.J."/>
            <person name="Land M.L."/>
            <person name="Thompson L.S."/>
        </authorList>
    </citation>
    <scope>NUCLEOTIDE SEQUENCE [LARGE SCALE GENOMIC DNA]</scope>
    <source>
        <strain>DSM 17664 / CCUG 51855 / 37</strain>
    </source>
</reference>
<gene>
    <name evidence="1" type="primary">truA</name>
    <name type="ordered locus">Ping_1969</name>
</gene>
<organism>
    <name type="scientific">Psychromonas ingrahamii (strain DSM 17664 / CCUG 51855 / 37)</name>
    <dbReference type="NCBI Taxonomy" id="357804"/>
    <lineage>
        <taxon>Bacteria</taxon>
        <taxon>Pseudomonadati</taxon>
        <taxon>Pseudomonadota</taxon>
        <taxon>Gammaproteobacteria</taxon>
        <taxon>Alteromonadales</taxon>
        <taxon>Psychromonadaceae</taxon>
        <taxon>Psychromonas</taxon>
    </lineage>
</organism>
<keyword id="KW-0413">Isomerase</keyword>
<keyword id="KW-1185">Reference proteome</keyword>
<keyword id="KW-0819">tRNA processing</keyword>
<proteinExistence type="inferred from homology"/>
<evidence type="ECO:0000255" key="1">
    <source>
        <dbReference type="HAMAP-Rule" id="MF_00171"/>
    </source>
</evidence>
<sequence>MRIALGIEYDGAAYYGWQRQKEVISVQQELEQSLSKIANHTVRVHCAGRTDSGVHSTGQVVHFETEAIRKDVAWTLGVNANLPKDIAVRWVKQVDSSFHARFSATARHYRYIIYNGAFRPGILGTGLSHYHMDLDVQKMHLAGQMLLGEQDFTSFRALHCQASSPVKCIEYLNISQRSQFIIIDIKANAFLHHMVRNIAGSLIEIGCGKQPVDWLKTLLAYKDRSKAAATAKPGGLYLVEVDYPSQYDLPRPPCGPLFLEL</sequence>
<protein>
    <recommendedName>
        <fullName evidence="1">tRNA pseudouridine synthase A</fullName>
        <ecNumber evidence="1">5.4.99.12</ecNumber>
    </recommendedName>
    <alternativeName>
        <fullName evidence="1">tRNA pseudouridine(38-40) synthase</fullName>
    </alternativeName>
    <alternativeName>
        <fullName evidence="1">tRNA pseudouridylate synthase I</fullName>
    </alternativeName>
    <alternativeName>
        <fullName evidence="1">tRNA-uridine isomerase I</fullName>
    </alternativeName>
</protein>
<accession>A1SW72</accession>
<name>TRUA_PSYIN</name>